<feature type="chain" id="PRO_0000310258" description="ATP-dependent RNA helicase DBP9">
    <location>
        <begin position="1"/>
        <end position="594"/>
    </location>
</feature>
<feature type="domain" description="Helicase ATP-binding" evidence="2">
    <location>
        <begin position="49"/>
        <end position="233"/>
    </location>
</feature>
<feature type="domain" description="Helicase C-terminal" evidence="3">
    <location>
        <begin position="246"/>
        <end position="476"/>
    </location>
</feature>
<feature type="region of interest" description="Disordered" evidence="4">
    <location>
        <begin position="339"/>
        <end position="377"/>
    </location>
</feature>
<feature type="region of interest" description="Disordered" evidence="4">
    <location>
        <begin position="558"/>
        <end position="594"/>
    </location>
</feature>
<feature type="short sequence motif" description="Q motif">
    <location>
        <begin position="17"/>
        <end position="45"/>
    </location>
</feature>
<feature type="short sequence motif" description="DEAD box">
    <location>
        <begin position="179"/>
        <end position="182"/>
    </location>
</feature>
<feature type="compositionally biased region" description="Basic and acidic residues" evidence="4">
    <location>
        <begin position="345"/>
        <end position="366"/>
    </location>
</feature>
<feature type="compositionally biased region" description="Basic residues" evidence="4">
    <location>
        <begin position="567"/>
        <end position="584"/>
    </location>
</feature>
<feature type="compositionally biased region" description="Basic and acidic residues" evidence="4">
    <location>
        <begin position="585"/>
        <end position="594"/>
    </location>
</feature>
<feature type="binding site" evidence="2">
    <location>
        <begin position="62"/>
        <end position="69"/>
    </location>
    <ligand>
        <name>ATP</name>
        <dbReference type="ChEBI" id="CHEBI:30616"/>
    </ligand>
</feature>
<evidence type="ECO:0000250" key="1"/>
<evidence type="ECO:0000255" key="2">
    <source>
        <dbReference type="PROSITE-ProRule" id="PRU00541"/>
    </source>
</evidence>
<evidence type="ECO:0000255" key="3">
    <source>
        <dbReference type="PROSITE-ProRule" id="PRU00542"/>
    </source>
</evidence>
<evidence type="ECO:0000256" key="4">
    <source>
        <dbReference type="SAM" id="MobiDB-lite"/>
    </source>
</evidence>
<evidence type="ECO:0000305" key="5"/>
<name>DBP9_YEAS7</name>
<protein>
    <recommendedName>
        <fullName>ATP-dependent RNA helicase DBP9</fullName>
        <ecNumber>3.6.4.13</ecNumber>
    </recommendedName>
    <alternativeName>
        <fullName>DEAD box protein 9</fullName>
    </alternativeName>
</protein>
<gene>
    <name type="primary">DBP9</name>
    <name type="ORF">SCY_3838</name>
</gene>
<reference key="1">
    <citation type="journal article" date="2007" name="Proc. Natl. Acad. Sci. U.S.A.">
        <title>Genome sequencing and comparative analysis of Saccharomyces cerevisiae strain YJM789.</title>
        <authorList>
            <person name="Wei W."/>
            <person name="McCusker J.H."/>
            <person name="Hyman R.W."/>
            <person name="Jones T."/>
            <person name="Ning Y."/>
            <person name="Cao Z."/>
            <person name="Gu Z."/>
            <person name="Bruno D."/>
            <person name="Miranda M."/>
            <person name="Nguyen M."/>
            <person name="Wilhelmy J."/>
            <person name="Komp C."/>
            <person name="Tamse R."/>
            <person name="Wang X."/>
            <person name="Jia P."/>
            <person name="Luedi P."/>
            <person name="Oefner P.J."/>
            <person name="David L."/>
            <person name="Dietrich F.S."/>
            <person name="Li Y."/>
            <person name="Davis R.W."/>
            <person name="Steinmetz L.M."/>
        </authorList>
    </citation>
    <scope>NUCLEOTIDE SEQUENCE [LARGE SCALE GENOMIC DNA]</scope>
    <source>
        <strain>YJM789</strain>
    </source>
</reference>
<comment type="function">
    <text evidence="1">ATP-binding RNA helicase involved in the biogenesis of 60S ribosomal subunits and is required for the normal formation of 25S and 5.8S rRNAs.</text>
</comment>
<comment type="catalytic activity">
    <reaction>
        <text>ATP + H2O = ADP + phosphate + H(+)</text>
        <dbReference type="Rhea" id="RHEA:13065"/>
        <dbReference type="ChEBI" id="CHEBI:15377"/>
        <dbReference type="ChEBI" id="CHEBI:15378"/>
        <dbReference type="ChEBI" id="CHEBI:30616"/>
        <dbReference type="ChEBI" id="CHEBI:43474"/>
        <dbReference type="ChEBI" id="CHEBI:456216"/>
        <dbReference type="EC" id="3.6.4.13"/>
    </reaction>
</comment>
<comment type="subunit">
    <text evidence="1">Interacts with DBP6.</text>
</comment>
<comment type="subcellular location">
    <subcellularLocation>
        <location evidence="1">Nucleus</location>
        <location evidence="1">Nucleolus</location>
    </subcellularLocation>
</comment>
<comment type="domain">
    <text>The Q motif is unique to and characteristic of the DEAD box family of RNA helicases and controls ATP binding and hydrolysis.</text>
</comment>
<comment type="similarity">
    <text evidence="5">Belongs to the DEAD box helicase family. DDX56/DBP9 subfamily.</text>
</comment>
<proteinExistence type="inferred from homology"/>
<accession>A7A1G0</accession>
<organism>
    <name type="scientific">Saccharomyces cerevisiae (strain YJM789)</name>
    <name type="common">Baker's yeast</name>
    <dbReference type="NCBI Taxonomy" id="307796"/>
    <lineage>
        <taxon>Eukaryota</taxon>
        <taxon>Fungi</taxon>
        <taxon>Dikarya</taxon>
        <taxon>Ascomycota</taxon>
        <taxon>Saccharomycotina</taxon>
        <taxon>Saccharomycetes</taxon>
        <taxon>Saccharomycetales</taxon>
        <taxon>Saccharomycetaceae</taxon>
        <taxon>Saccharomyces</taxon>
    </lineage>
</organism>
<dbReference type="EC" id="3.6.4.13"/>
<dbReference type="EMBL" id="AAFW02000170">
    <property type="protein sequence ID" value="EDN59364.1"/>
    <property type="molecule type" value="Genomic_DNA"/>
</dbReference>
<dbReference type="SMR" id="A7A1G0"/>
<dbReference type="HOGENOM" id="CLU_003041_17_1_1"/>
<dbReference type="Proteomes" id="UP000007060">
    <property type="component" value="Unassembled WGS sequence"/>
</dbReference>
<dbReference type="GO" id="GO:0005829">
    <property type="term" value="C:cytosol"/>
    <property type="evidence" value="ECO:0007669"/>
    <property type="project" value="TreeGrafter"/>
</dbReference>
<dbReference type="GO" id="GO:0005730">
    <property type="term" value="C:nucleolus"/>
    <property type="evidence" value="ECO:0007669"/>
    <property type="project" value="UniProtKB-SubCell"/>
</dbReference>
<dbReference type="GO" id="GO:0005524">
    <property type="term" value="F:ATP binding"/>
    <property type="evidence" value="ECO:0007669"/>
    <property type="project" value="UniProtKB-KW"/>
</dbReference>
<dbReference type="GO" id="GO:0016887">
    <property type="term" value="F:ATP hydrolysis activity"/>
    <property type="evidence" value="ECO:0007669"/>
    <property type="project" value="RHEA"/>
</dbReference>
<dbReference type="GO" id="GO:0003723">
    <property type="term" value="F:RNA binding"/>
    <property type="evidence" value="ECO:0007669"/>
    <property type="project" value="UniProtKB-KW"/>
</dbReference>
<dbReference type="GO" id="GO:0003724">
    <property type="term" value="F:RNA helicase activity"/>
    <property type="evidence" value="ECO:0007669"/>
    <property type="project" value="UniProtKB-EC"/>
</dbReference>
<dbReference type="GO" id="GO:0006364">
    <property type="term" value="P:rRNA processing"/>
    <property type="evidence" value="ECO:0007669"/>
    <property type="project" value="UniProtKB-KW"/>
</dbReference>
<dbReference type="CDD" id="cd17961">
    <property type="entry name" value="DEADc_DDX56"/>
    <property type="match status" value="1"/>
</dbReference>
<dbReference type="CDD" id="cd18787">
    <property type="entry name" value="SF2_C_DEAD"/>
    <property type="match status" value="1"/>
</dbReference>
<dbReference type="FunFam" id="3.40.50.300:FF:000939">
    <property type="entry name" value="Probable ATP-dependent RNA helicase DDX56"/>
    <property type="match status" value="1"/>
</dbReference>
<dbReference type="FunFam" id="3.40.50.300:FF:001046">
    <property type="entry name" value="Probable ATP-dependent RNA helicase ddx56"/>
    <property type="match status" value="1"/>
</dbReference>
<dbReference type="Gene3D" id="3.40.50.300">
    <property type="entry name" value="P-loop containing nucleotide triphosphate hydrolases"/>
    <property type="match status" value="2"/>
</dbReference>
<dbReference type="InterPro" id="IPR011545">
    <property type="entry name" value="DEAD/DEAH_box_helicase_dom"/>
</dbReference>
<dbReference type="InterPro" id="IPR050079">
    <property type="entry name" value="DEAD_box_RNA_helicase"/>
</dbReference>
<dbReference type="InterPro" id="IPR014001">
    <property type="entry name" value="Helicase_ATP-bd"/>
</dbReference>
<dbReference type="InterPro" id="IPR001650">
    <property type="entry name" value="Helicase_C-like"/>
</dbReference>
<dbReference type="InterPro" id="IPR027417">
    <property type="entry name" value="P-loop_NTPase"/>
</dbReference>
<dbReference type="InterPro" id="IPR014014">
    <property type="entry name" value="RNA_helicase_DEAD_Q_motif"/>
</dbReference>
<dbReference type="PANTHER" id="PTHR47959">
    <property type="entry name" value="ATP-DEPENDENT RNA HELICASE RHLE-RELATED"/>
    <property type="match status" value="1"/>
</dbReference>
<dbReference type="PANTHER" id="PTHR47959:SF21">
    <property type="entry name" value="DEAD-BOX HELICASE 56"/>
    <property type="match status" value="1"/>
</dbReference>
<dbReference type="Pfam" id="PF00270">
    <property type="entry name" value="DEAD"/>
    <property type="match status" value="1"/>
</dbReference>
<dbReference type="Pfam" id="PF00271">
    <property type="entry name" value="Helicase_C"/>
    <property type="match status" value="2"/>
</dbReference>
<dbReference type="SMART" id="SM00487">
    <property type="entry name" value="DEXDc"/>
    <property type="match status" value="1"/>
</dbReference>
<dbReference type="SMART" id="SM00490">
    <property type="entry name" value="HELICc"/>
    <property type="match status" value="1"/>
</dbReference>
<dbReference type="SUPFAM" id="SSF52540">
    <property type="entry name" value="P-loop containing nucleoside triphosphate hydrolases"/>
    <property type="match status" value="2"/>
</dbReference>
<dbReference type="PROSITE" id="PS51192">
    <property type="entry name" value="HELICASE_ATP_BIND_1"/>
    <property type="match status" value="1"/>
</dbReference>
<dbReference type="PROSITE" id="PS51194">
    <property type="entry name" value="HELICASE_CTER"/>
    <property type="match status" value="1"/>
</dbReference>
<dbReference type="PROSITE" id="PS51195">
    <property type="entry name" value="Q_MOTIF"/>
    <property type="match status" value="1"/>
</dbReference>
<sequence length="594" mass="68060">MSYEKKSVEGAYIDDSTTFEAFHLDSRLLQAIKNIGFQYPTLIQSHAIPLALQQKRDIIAKAATGSGKTLAYLIPVIETILEYKKTIDNGEENGTLGIILVPTRELAQQVYNVLEKLVLYCSKDIRTLNISSDMSDSVLSTLLMDQPEIIVGTPGKLLDLLQTKINSISLNELKFLVVDEVDLVLTFGYQDDLNKIGEYLPLKKNLQTFLMSATLNDDIQALKQKFCRSPAILKFNDEEINKNQNKLLQYYVKVSEFDKFLLCYVIFKLNLIKGKTLIFVNNIDRGYRLKLVMEQFGIKSCILNSELPVNSRQHIVDQFNKNVYQLLIATDDTEYIKEEDDEIEEGHNTENQEEKSLEGEPENDKKPSKKKKVQVKKDKEYGVSRGVDFKNVACVLNFDLPTTAKSYVHRVGRTARGGKTGTAISFVVPLKEFGKHKPSMLQTAKKDERILSRIIKQQSKLGLELQPYKFDQKQVEAFRYRMEDGFRAVTQVAIREARVKELKQELLASEKLKRHFEENPKELQSLRHDKELHPARVQQHLKRVPDYLLPESARGNGTKVKFVPFHNAKKRHSHKKGRVSKPKNGKVDPLKNFK</sequence>
<keyword id="KW-0067">ATP-binding</keyword>
<keyword id="KW-0347">Helicase</keyword>
<keyword id="KW-0378">Hydrolase</keyword>
<keyword id="KW-0547">Nucleotide-binding</keyword>
<keyword id="KW-0539">Nucleus</keyword>
<keyword id="KW-0690">Ribosome biogenesis</keyword>
<keyword id="KW-0694">RNA-binding</keyword>
<keyword id="KW-0698">rRNA processing</keyword>